<protein>
    <recommendedName>
        <fullName>Desmoglein-4</fullName>
    </recommendedName>
</protein>
<accession>Q7TMD7</accession>
<organism>
    <name type="scientific">Mus musculus</name>
    <name type="common">Mouse</name>
    <dbReference type="NCBI Taxonomy" id="10090"/>
    <lineage>
        <taxon>Eukaryota</taxon>
        <taxon>Metazoa</taxon>
        <taxon>Chordata</taxon>
        <taxon>Craniata</taxon>
        <taxon>Vertebrata</taxon>
        <taxon>Euteleostomi</taxon>
        <taxon>Mammalia</taxon>
        <taxon>Eutheria</taxon>
        <taxon>Euarchontoglires</taxon>
        <taxon>Glires</taxon>
        <taxon>Rodentia</taxon>
        <taxon>Myomorpha</taxon>
        <taxon>Muroidea</taxon>
        <taxon>Muridae</taxon>
        <taxon>Murinae</taxon>
        <taxon>Mus</taxon>
        <taxon>Mus</taxon>
    </lineage>
</organism>
<gene>
    <name type="primary">Dsg4</name>
</gene>
<proteinExistence type="evidence at protein level"/>
<evidence type="ECO:0000250" key="1">
    <source>
        <dbReference type="UniProtKB" id="Q6W3B0"/>
    </source>
</evidence>
<evidence type="ECO:0000250" key="2">
    <source>
        <dbReference type="UniProtKB" id="Q86SJ6"/>
    </source>
</evidence>
<evidence type="ECO:0000250" key="3">
    <source>
        <dbReference type="UniProtKB" id="Q8AYD0"/>
    </source>
</evidence>
<evidence type="ECO:0000255" key="4"/>
<evidence type="ECO:0000255" key="5">
    <source>
        <dbReference type="PROSITE-ProRule" id="PRU00043"/>
    </source>
</evidence>
<evidence type="ECO:0000256" key="6">
    <source>
        <dbReference type="SAM" id="MobiDB-lite"/>
    </source>
</evidence>
<evidence type="ECO:0000269" key="7">
    <source>
    </source>
</evidence>
<evidence type="ECO:0000269" key="8">
    <source>
    </source>
</evidence>
<comment type="function">
    <text evidence="1 7">A component of desmosome cell-cell junctions which are required for positive regulation of cellular adhesion (PubMed:12705872). Coordinates the transition from proliferation to differentiation in hair follicle keratinocytes (PubMed:12705872). Plays a role in moderating lymphocyte migration to inflamed skin and maintaining homeostasis of the epidermal inflammatory response (By similarity).</text>
</comment>
<comment type="subunit">
    <text evidence="2">Interacts with JUP.</text>
</comment>
<comment type="subcellular location">
    <subcellularLocation>
        <location evidence="2">Cell membrane</location>
        <topology evidence="4">Single-pass type I membrane protein</topology>
    </subcellularLocation>
    <subcellularLocation>
        <location evidence="2">Cell junction</location>
        <location evidence="2">Desmosome</location>
    </subcellularLocation>
    <text evidence="2">Colocalizes with JUP at desmosomes.</text>
</comment>
<comment type="tissue specificity">
    <text evidence="7 8">Strongly expressed in the skin; during the anagen stage of hair follicles in the matrix, precortex and inner rooth sheath.</text>
</comment>
<comment type="developmental stage">
    <text evidence="8">Expressed in the embryo at 7 to 17 dpc.</text>
</comment>
<comment type="domain">
    <text evidence="3">Three calcium ions are usually bound at the interface of each cadherin domain and rigidify the connections, imparting a strong curvature to the full-length ectodomain.</text>
</comment>
<comment type="disease">
    <text evidence="7">Defects in Dsg4 are the cause of an autosomal recessive phenotype lanceolate hair (lah) (PubMed:12705872). Lah mouse pups develop only a few short hairs on the head and neck which form a lance head at the tip and disappear within a few month (PubMed:12705872). They have thickened skin and do not exhibit any growth retardation (PubMed:12705872).</text>
</comment>
<keyword id="KW-0106">Calcium</keyword>
<keyword id="KW-0130">Cell adhesion</keyword>
<keyword id="KW-0965">Cell junction</keyword>
<keyword id="KW-1003">Cell membrane</keyword>
<keyword id="KW-0165">Cleavage on pair of basic residues</keyword>
<keyword id="KW-0225">Disease variant</keyword>
<keyword id="KW-0325">Glycoprotein</keyword>
<keyword id="KW-0472">Membrane</keyword>
<keyword id="KW-0479">Metal-binding</keyword>
<keyword id="KW-1185">Reference proteome</keyword>
<keyword id="KW-0677">Repeat</keyword>
<keyword id="KW-0732">Signal</keyword>
<keyword id="KW-0812">Transmembrane</keyword>
<keyword id="KW-1133">Transmembrane helix</keyword>
<feature type="signal peptide" evidence="4">
    <location>
        <begin position="1"/>
        <end position="23"/>
    </location>
</feature>
<feature type="propeptide" id="PRO_0000003857" evidence="4">
    <location>
        <begin position="24"/>
        <end position="49"/>
    </location>
</feature>
<feature type="chain" id="PRO_0000003858" description="Desmoglein-4">
    <location>
        <begin position="50"/>
        <end position="1041"/>
    </location>
</feature>
<feature type="topological domain" description="Extracellular" evidence="4">
    <location>
        <begin position="50"/>
        <end position="634"/>
    </location>
</feature>
<feature type="transmembrane region" description="Helical" evidence="4">
    <location>
        <begin position="635"/>
        <end position="655"/>
    </location>
</feature>
<feature type="topological domain" description="Cytoplasmic" evidence="4">
    <location>
        <begin position="656"/>
        <end position="1041"/>
    </location>
</feature>
<feature type="domain" description="Cadherin 1" evidence="5">
    <location>
        <begin position="50"/>
        <end position="157"/>
    </location>
</feature>
<feature type="domain" description="Cadherin 2" evidence="5">
    <location>
        <begin position="158"/>
        <end position="269"/>
    </location>
</feature>
<feature type="domain" description="Cadherin 3" evidence="5">
    <location>
        <begin position="270"/>
        <end position="385"/>
    </location>
</feature>
<feature type="domain" description="Cadherin 4" evidence="5">
    <location>
        <begin position="389"/>
        <end position="497"/>
    </location>
</feature>
<feature type="repeat" description="Desmoglein repeat 1">
    <location>
        <begin position="884"/>
        <end position="910"/>
    </location>
</feature>
<feature type="repeat" description="Desmoglein repeat 2">
    <location>
        <begin position="911"/>
        <end position="941"/>
    </location>
</feature>
<feature type="region of interest" description="Disordered" evidence="6">
    <location>
        <begin position="1014"/>
        <end position="1041"/>
    </location>
</feature>
<feature type="glycosylation site" description="N-linked (GlcNAc...) asparagine" evidence="4">
    <location>
        <position position="110"/>
    </location>
</feature>
<feature type="glycosylation site" description="N-linked (GlcNAc...) asparagine" evidence="4">
    <location>
        <position position="545"/>
    </location>
</feature>
<feature type="sequence variant" description="In lah." evidence="7">
    <original>Y</original>
    <variation>S</variation>
    <location>
        <position position="196"/>
    </location>
</feature>
<dbReference type="EMBL" id="AY227349">
    <property type="protein sequence ID" value="AAP44999.1"/>
    <property type="molecule type" value="mRNA"/>
</dbReference>
<dbReference type="EMBL" id="AY191584">
    <property type="protein sequence ID" value="AAO91793.1"/>
    <property type="molecule type" value="mRNA"/>
</dbReference>
<dbReference type="CCDS" id="CCDS29082.1"/>
<dbReference type="RefSeq" id="NP_853543.1">
    <property type="nucleotide sequence ID" value="NM_181564.3"/>
</dbReference>
<dbReference type="SMR" id="Q7TMD7"/>
<dbReference type="BioGRID" id="201094">
    <property type="interactions" value="1"/>
</dbReference>
<dbReference type="FunCoup" id="Q7TMD7">
    <property type="interactions" value="50"/>
</dbReference>
<dbReference type="IntAct" id="Q7TMD7">
    <property type="interactions" value="1"/>
</dbReference>
<dbReference type="STRING" id="10090.ENSMUSP00000019426"/>
<dbReference type="GlyCosmos" id="Q7TMD7">
    <property type="glycosylation" value="2 sites, No reported glycans"/>
</dbReference>
<dbReference type="GlyGen" id="Q7TMD7">
    <property type="glycosylation" value="2 sites, 1 N-linked glycan (1 site)"/>
</dbReference>
<dbReference type="iPTMnet" id="Q7TMD7"/>
<dbReference type="PhosphoSitePlus" id="Q7TMD7"/>
<dbReference type="jPOST" id="Q7TMD7"/>
<dbReference type="PaxDb" id="10090-ENSMUSP00000019426"/>
<dbReference type="ProteomicsDB" id="277413"/>
<dbReference type="Antibodypedia" id="22155">
    <property type="antibodies" value="109 antibodies from 25 providers"/>
</dbReference>
<dbReference type="DNASU" id="16769"/>
<dbReference type="Ensembl" id="ENSMUST00000019426.5">
    <property type="protein sequence ID" value="ENSMUSP00000019426.5"/>
    <property type="gene ID" value="ENSMUSG00000001804.10"/>
</dbReference>
<dbReference type="GeneID" id="16769"/>
<dbReference type="KEGG" id="mmu:16769"/>
<dbReference type="UCSC" id="uc008een.1">
    <property type="organism name" value="mouse"/>
</dbReference>
<dbReference type="AGR" id="MGI:2661061"/>
<dbReference type="CTD" id="147409"/>
<dbReference type="MGI" id="MGI:2661061">
    <property type="gene designation" value="Dsg4"/>
</dbReference>
<dbReference type="VEuPathDB" id="HostDB:ENSMUSG00000001804"/>
<dbReference type="eggNOG" id="KOG3594">
    <property type="taxonomic scope" value="Eukaryota"/>
</dbReference>
<dbReference type="GeneTree" id="ENSGT01030000234624"/>
<dbReference type="HOGENOM" id="CLU_005284_0_0_1"/>
<dbReference type="InParanoid" id="Q7TMD7"/>
<dbReference type="OMA" id="PEPMIHG"/>
<dbReference type="OrthoDB" id="8961010at2759"/>
<dbReference type="PhylomeDB" id="Q7TMD7"/>
<dbReference type="TreeFam" id="TF331809"/>
<dbReference type="Reactome" id="R-MMU-6805567">
    <property type="pathway name" value="Keratinization"/>
</dbReference>
<dbReference type="Reactome" id="R-MMU-6809371">
    <property type="pathway name" value="Formation of the cornified envelope"/>
</dbReference>
<dbReference type="BioGRID-ORCS" id="16769">
    <property type="hits" value="4 hits in 79 CRISPR screens"/>
</dbReference>
<dbReference type="PRO" id="PR:Q7TMD7"/>
<dbReference type="Proteomes" id="UP000000589">
    <property type="component" value="Chromosome 18"/>
</dbReference>
<dbReference type="RNAct" id="Q7TMD7">
    <property type="molecule type" value="protein"/>
</dbReference>
<dbReference type="Bgee" id="ENSMUSG00000001804">
    <property type="expression patterns" value="Expressed in lip and 6 other cell types or tissues"/>
</dbReference>
<dbReference type="GO" id="GO:0030057">
    <property type="term" value="C:desmosome"/>
    <property type="evidence" value="ECO:0000315"/>
    <property type="project" value="MGI"/>
</dbReference>
<dbReference type="GO" id="GO:0005886">
    <property type="term" value="C:plasma membrane"/>
    <property type="evidence" value="ECO:0007669"/>
    <property type="project" value="UniProtKB-SubCell"/>
</dbReference>
<dbReference type="GO" id="GO:0005509">
    <property type="term" value="F:calcium ion binding"/>
    <property type="evidence" value="ECO:0007669"/>
    <property type="project" value="Ensembl"/>
</dbReference>
<dbReference type="GO" id="GO:0030509">
    <property type="term" value="P:BMP signaling pathway"/>
    <property type="evidence" value="ECO:0000314"/>
    <property type="project" value="MGI"/>
</dbReference>
<dbReference type="GO" id="GO:0098609">
    <property type="term" value="P:cell-cell adhesion"/>
    <property type="evidence" value="ECO:0000315"/>
    <property type="project" value="MGI"/>
</dbReference>
<dbReference type="GO" id="GO:0001942">
    <property type="term" value="P:hair follicle development"/>
    <property type="evidence" value="ECO:0000314"/>
    <property type="project" value="MGI"/>
</dbReference>
<dbReference type="GO" id="GO:0007156">
    <property type="term" value="P:homophilic cell adhesion via plasma membrane adhesion molecules"/>
    <property type="evidence" value="ECO:0007669"/>
    <property type="project" value="InterPro"/>
</dbReference>
<dbReference type="GO" id="GO:0030216">
    <property type="term" value="P:keratinocyte differentiation"/>
    <property type="evidence" value="ECO:0000315"/>
    <property type="project" value="MGI"/>
</dbReference>
<dbReference type="CDD" id="cd11304">
    <property type="entry name" value="Cadherin_repeat"/>
    <property type="match status" value="4"/>
</dbReference>
<dbReference type="FunFam" id="2.60.40.60:FF:000011">
    <property type="entry name" value="Cadherin 1"/>
    <property type="match status" value="1"/>
</dbReference>
<dbReference type="FunFam" id="2.60.40.60:FF:000031">
    <property type="entry name" value="Cadherin 3"/>
    <property type="match status" value="1"/>
</dbReference>
<dbReference type="FunFam" id="2.60.40.60:FF:000068">
    <property type="entry name" value="Desmoglein 1"/>
    <property type="match status" value="1"/>
</dbReference>
<dbReference type="FunFam" id="2.60.40.60:FF:000083">
    <property type="entry name" value="Desmoglein 1"/>
    <property type="match status" value="1"/>
</dbReference>
<dbReference type="FunFam" id="4.10.900.10:FF:000003">
    <property type="entry name" value="Desmoglein 1"/>
    <property type="match status" value="1"/>
</dbReference>
<dbReference type="FunFam" id="2.60.40.60:FF:000074">
    <property type="entry name" value="Desmoglein 4"/>
    <property type="match status" value="1"/>
</dbReference>
<dbReference type="Gene3D" id="2.60.40.60">
    <property type="entry name" value="Cadherins"/>
    <property type="match status" value="5"/>
</dbReference>
<dbReference type="Gene3D" id="4.10.900.10">
    <property type="entry name" value="TCF3-CBD (Catenin binding domain)"/>
    <property type="match status" value="1"/>
</dbReference>
<dbReference type="InterPro" id="IPR050971">
    <property type="entry name" value="Cadherin-domain_protein"/>
</dbReference>
<dbReference type="InterPro" id="IPR002126">
    <property type="entry name" value="Cadherin-like_dom"/>
</dbReference>
<dbReference type="InterPro" id="IPR015919">
    <property type="entry name" value="Cadherin-like_sf"/>
</dbReference>
<dbReference type="InterPro" id="IPR020894">
    <property type="entry name" value="Cadherin_CS"/>
</dbReference>
<dbReference type="InterPro" id="IPR000233">
    <property type="entry name" value="Cadherin_Y-type_LIR"/>
</dbReference>
<dbReference type="InterPro" id="IPR027397">
    <property type="entry name" value="Catenin-bd_sf"/>
</dbReference>
<dbReference type="InterPro" id="IPR009122">
    <property type="entry name" value="Desmosomal_cadherin"/>
</dbReference>
<dbReference type="PANTHER" id="PTHR24025">
    <property type="entry name" value="DESMOGLEIN FAMILY MEMBER"/>
    <property type="match status" value="1"/>
</dbReference>
<dbReference type="PANTHER" id="PTHR24025:SF10">
    <property type="entry name" value="DESMOGLEIN-4"/>
    <property type="match status" value="1"/>
</dbReference>
<dbReference type="Pfam" id="PF01049">
    <property type="entry name" value="CADH_Y-type_LIR"/>
    <property type="match status" value="1"/>
</dbReference>
<dbReference type="Pfam" id="PF00028">
    <property type="entry name" value="Cadherin"/>
    <property type="match status" value="3"/>
</dbReference>
<dbReference type="PRINTS" id="PR00205">
    <property type="entry name" value="CADHERIN"/>
</dbReference>
<dbReference type="PRINTS" id="PR01818">
    <property type="entry name" value="DESMOCADHERN"/>
</dbReference>
<dbReference type="PRINTS" id="PR01819">
    <property type="entry name" value="DESMOGLEIN"/>
</dbReference>
<dbReference type="SMART" id="SM00112">
    <property type="entry name" value="CA"/>
    <property type="match status" value="4"/>
</dbReference>
<dbReference type="SUPFAM" id="SSF49313">
    <property type="entry name" value="Cadherin-like"/>
    <property type="match status" value="4"/>
</dbReference>
<dbReference type="PROSITE" id="PS00232">
    <property type="entry name" value="CADHERIN_1"/>
    <property type="match status" value="2"/>
</dbReference>
<dbReference type="PROSITE" id="PS50268">
    <property type="entry name" value="CADHERIN_2"/>
    <property type="match status" value="4"/>
</dbReference>
<reference key="1">
    <citation type="journal article" date="2003" name="Cell">
        <title>Desmoglein 4 in hair follicle differentiation and epidermal adhesion. Evidence from inherited hypotrichosis and acquired pemphigus vulgaris.</title>
        <authorList>
            <person name="Kljuic A."/>
            <person name="Bazzi H."/>
            <person name="Sundberg J.P."/>
            <person name="Martinez-Mir A."/>
            <person name="O'Shaughnessy R."/>
            <person name="Mahoney M.G."/>
            <person name="Levy M."/>
            <person name="Montagutelli X."/>
            <person name="Ahmad W."/>
            <person name="Aita V.M."/>
            <person name="Gordon D."/>
            <person name="Uitto J."/>
            <person name="Whiting D."/>
            <person name="Ott J."/>
            <person name="Fischer S."/>
            <person name="Gilliam T.C."/>
            <person name="Jahoda C.A.B."/>
            <person name="Morris R.J."/>
            <person name="Panteleyev A.A."/>
            <person name="Nguyen V.T."/>
            <person name="Christiano A.M."/>
        </authorList>
    </citation>
    <scope>NUCLEOTIDE SEQUENCE [MRNA]</scope>
    <scope>FUNCTION</scope>
    <scope>TISSUE SPECIFICITY</scope>
    <scope>VARIANT LAH SER-196</scope>
    <source>
        <strain>PWK</strain>
        <tissue>Skin</tissue>
    </source>
</reference>
<reference key="2">
    <citation type="journal article" date="2003" name="J. Invest. Dermatol.">
        <title>Genomic sequence analysis of the mouse desmoglein cluster reveals evidence for six distinct genes: characterization of mouse DSG4, DSG5, and DSG6.</title>
        <authorList>
            <person name="Whittock N.V."/>
        </authorList>
    </citation>
    <scope>NUCLEOTIDE SEQUENCE [MRNA]</scope>
    <scope>TISSUE SPECIFICITY</scope>
    <scope>DEVELOPMENTAL STAGE</scope>
    <source>
        <tissue>Skin</tissue>
    </source>
</reference>
<sequence length="1041" mass="114449">MDWLLFRNICLLILFMVVLGVNSEFIVEVKELDIENGTTTWQTVRRQKREWIKFAAACREGEDNSKRNPIARIRSDCEVSQRITYRISGAGIDRPPYGVFTINPRTGEINITSVVDREITPLFLIHCRALNSRGEDLERPLELRVKVMDVNDNPPVFTQNVYTANIEENSDANALVVKLSATDADEDNHLNSKIAYKIISQEPAGAPMFMVNRYTGEVRTMSNFLDREQHSMYNLLVRGSDRDGATDGLSSECDCRIKILDVNDNFPILEKTSYSASIEENCLSSELIRLQAIDLDEEGTDNWLAQYSILSGNDGNWFEIQTDPKTNEGILKVVKMLDYEQEPNIYLSIGVRNQAEFHHSVASQFQMHSTPVRIQVVNVREGPTFSPSSMTFSLRGGMRGASLMNYVLGTYTAIDMDTGNPATNVRYVIGHDAGSWLKVDSRTGEIQFSREFDMKSKYITDGIYAAQILAIDDGSGRTATGTICIEIPDANDYCPVIYAESRSVCTHASSVRIYVNDHSFGSPFTFCVVDESPDIANIWDIRSINGTSAILMTEQTLSPGPYQIPILVKDSHNRACELPQTVLLDACFCDDHHVCLHSSTTGIYTGDITWVTDDMYGTVTDDGVRQSNVGLGPAGIGMIILGLLLLLLSPLLLLMCCCKRRQPEGLGTRFAPVPEGGEGVMQPWRIEGAHPEDRDVSNICVPMTASNTQDRIDSSEIYTNTYAGGGTVEGGVSGVELNTGVGTATGMVAAGATGTLRKRSSTIGTLREYQDTGMNMAFLDSYFSEKAYAYADEDEGRPANDCLLIYDHEGAGSPVGSIGCCSWIVDDLDESYIETLDPKFRTLAEICLDTEIEPFPSHQACIPISTDLPLLGPNYFVNESSGMTLSEAEFQAEMAAASEPMIHGDIIVTETYTTSDPCVQPTTIVFDSQIPPNVVVTETVMAPVYDVQGNICVPAEIANTHNVYYAERVVASPGIPDMGNSNISDACIGPVMSGGILVGPEIQVTQMMSPDIHISQTTGSTSPMTSQHRVTRYSNMHYSRQ</sequence>
<name>DSG4_MOUSE</name>